<dbReference type="EC" id="7.1.2.2" evidence="1"/>
<dbReference type="EMBL" id="Y15789">
    <property type="protein sequence ID" value="CAA75783.1"/>
    <property type="molecule type" value="Genomic_DNA"/>
</dbReference>
<dbReference type="RefSeq" id="WP_033191080.1">
    <property type="nucleotide sequence ID" value="NZ_CP014334.2"/>
</dbReference>
<dbReference type="SMR" id="O50341"/>
<dbReference type="STRING" id="2423.NA23_03535"/>
<dbReference type="eggNOG" id="COG0055">
    <property type="taxonomic scope" value="Bacteria"/>
</dbReference>
<dbReference type="OrthoDB" id="9801639at2"/>
<dbReference type="GO" id="GO:0005886">
    <property type="term" value="C:plasma membrane"/>
    <property type="evidence" value="ECO:0007669"/>
    <property type="project" value="UniProtKB-SubCell"/>
</dbReference>
<dbReference type="GO" id="GO:0045259">
    <property type="term" value="C:proton-transporting ATP synthase complex"/>
    <property type="evidence" value="ECO:0007669"/>
    <property type="project" value="UniProtKB-KW"/>
</dbReference>
<dbReference type="GO" id="GO:0005524">
    <property type="term" value="F:ATP binding"/>
    <property type="evidence" value="ECO:0007669"/>
    <property type="project" value="UniProtKB-UniRule"/>
</dbReference>
<dbReference type="GO" id="GO:0016887">
    <property type="term" value="F:ATP hydrolysis activity"/>
    <property type="evidence" value="ECO:0007669"/>
    <property type="project" value="InterPro"/>
</dbReference>
<dbReference type="GO" id="GO:0046933">
    <property type="term" value="F:proton-transporting ATP synthase activity, rotational mechanism"/>
    <property type="evidence" value="ECO:0007669"/>
    <property type="project" value="UniProtKB-UniRule"/>
</dbReference>
<dbReference type="CDD" id="cd18110">
    <property type="entry name" value="ATP-synt_F1_beta_C"/>
    <property type="match status" value="1"/>
</dbReference>
<dbReference type="CDD" id="cd18115">
    <property type="entry name" value="ATP-synt_F1_beta_N"/>
    <property type="match status" value="1"/>
</dbReference>
<dbReference type="CDD" id="cd01133">
    <property type="entry name" value="F1-ATPase_beta_CD"/>
    <property type="match status" value="1"/>
</dbReference>
<dbReference type="FunFam" id="1.10.1140.10:FF:000001">
    <property type="entry name" value="ATP synthase subunit beta"/>
    <property type="match status" value="1"/>
</dbReference>
<dbReference type="FunFam" id="2.40.10.170:FF:000005">
    <property type="entry name" value="ATP synthase subunit beta"/>
    <property type="match status" value="1"/>
</dbReference>
<dbReference type="FunFam" id="3.40.50.300:FF:000026">
    <property type="entry name" value="ATP synthase subunit beta"/>
    <property type="match status" value="1"/>
</dbReference>
<dbReference type="Gene3D" id="2.40.10.170">
    <property type="match status" value="1"/>
</dbReference>
<dbReference type="Gene3D" id="1.10.1140.10">
    <property type="entry name" value="Bovine Mitochondrial F1-atpase, Atp Synthase Beta Chain, Chain D, domain 3"/>
    <property type="match status" value="1"/>
</dbReference>
<dbReference type="Gene3D" id="3.40.50.300">
    <property type="entry name" value="P-loop containing nucleotide triphosphate hydrolases"/>
    <property type="match status" value="1"/>
</dbReference>
<dbReference type="HAMAP" id="MF_01347">
    <property type="entry name" value="ATP_synth_beta_bact"/>
    <property type="match status" value="1"/>
</dbReference>
<dbReference type="InterPro" id="IPR003593">
    <property type="entry name" value="AAA+_ATPase"/>
</dbReference>
<dbReference type="InterPro" id="IPR055190">
    <property type="entry name" value="ATP-synt_VA_C"/>
</dbReference>
<dbReference type="InterPro" id="IPR005722">
    <property type="entry name" value="ATP_synth_F1_bsu"/>
</dbReference>
<dbReference type="InterPro" id="IPR020003">
    <property type="entry name" value="ATPase_a/bsu_AS"/>
</dbReference>
<dbReference type="InterPro" id="IPR050053">
    <property type="entry name" value="ATPase_alpha/beta_chains"/>
</dbReference>
<dbReference type="InterPro" id="IPR004100">
    <property type="entry name" value="ATPase_F1/V1/A1_a/bsu_N"/>
</dbReference>
<dbReference type="InterPro" id="IPR036121">
    <property type="entry name" value="ATPase_F1/V1/A1_a/bsu_N_sf"/>
</dbReference>
<dbReference type="InterPro" id="IPR000194">
    <property type="entry name" value="ATPase_F1/V1/A1_a/bsu_nucl-bd"/>
</dbReference>
<dbReference type="InterPro" id="IPR024034">
    <property type="entry name" value="ATPase_F1/V1_b/a_C"/>
</dbReference>
<dbReference type="InterPro" id="IPR027417">
    <property type="entry name" value="P-loop_NTPase"/>
</dbReference>
<dbReference type="NCBIfam" id="TIGR01039">
    <property type="entry name" value="atpD"/>
    <property type="match status" value="1"/>
</dbReference>
<dbReference type="PANTHER" id="PTHR15184">
    <property type="entry name" value="ATP SYNTHASE"/>
    <property type="match status" value="1"/>
</dbReference>
<dbReference type="PANTHER" id="PTHR15184:SF71">
    <property type="entry name" value="ATP SYNTHASE SUBUNIT BETA, MITOCHONDRIAL"/>
    <property type="match status" value="1"/>
</dbReference>
<dbReference type="Pfam" id="PF00006">
    <property type="entry name" value="ATP-synt_ab"/>
    <property type="match status" value="1"/>
</dbReference>
<dbReference type="Pfam" id="PF02874">
    <property type="entry name" value="ATP-synt_ab_N"/>
    <property type="match status" value="1"/>
</dbReference>
<dbReference type="Pfam" id="PF22919">
    <property type="entry name" value="ATP-synt_VA_C"/>
    <property type="match status" value="1"/>
</dbReference>
<dbReference type="SMART" id="SM00382">
    <property type="entry name" value="AAA"/>
    <property type="match status" value="1"/>
</dbReference>
<dbReference type="SUPFAM" id="SSF47917">
    <property type="entry name" value="C-terminal domain of alpha and beta subunits of F1 ATP synthase"/>
    <property type="match status" value="1"/>
</dbReference>
<dbReference type="SUPFAM" id="SSF50615">
    <property type="entry name" value="N-terminal domain of alpha and beta subunits of F1 ATP synthase"/>
    <property type="match status" value="1"/>
</dbReference>
<dbReference type="SUPFAM" id="SSF52540">
    <property type="entry name" value="P-loop containing nucleoside triphosphate hydrolases"/>
    <property type="match status" value="1"/>
</dbReference>
<dbReference type="PROSITE" id="PS00152">
    <property type="entry name" value="ATPASE_ALPHA_BETA"/>
    <property type="match status" value="1"/>
</dbReference>
<comment type="function">
    <text evidence="1">Produces ATP from ADP in the presence of a proton gradient across the membrane. The catalytic sites are hosted primarily by the beta subunits.</text>
</comment>
<comment type="catalytic activity">
    <reaction evidence="1">
        <text>ATP + H2O + 4 H(+)(in) = ADP + phosphate + 5 H(+)(out)</text>
        <dbReference type="Rhea" id="RHEA:57720"/>
        <dbReference type="ChEBI" id="CHEBI:15377"/>
        <dbReference type="ChEBI" id="CHEBI:15378"/>
        <dbReference type="ChEBI" id="CHEBI:30616"/>
        <dbReference type="ChEBI" id="CHEBI:43474"/>
        <dbReference type="ChEBI" id="CHEBI:456216"/>
        <dbReference type="EC" id="7.1.2.2"/>
    </reaction>
</comment>
<comment type="subunit">
    <text evidence="1">F-type ATPases have 2 components, CF(1) - the catalytic core - and CF(0) - the membrane proton channel. CF(1) has five subunits: alpha(3), beta(3), gamma(1), delta(1), epsilon(1). CF(0) has three main subunits: a(1), b(2) and c(9-12). The alpha and beta chains form an alternating ring which encloses part of the gamma chain. CF(1) is attached to CF(0) by a central stalk formed by the gamma and epsilon chains, while a peripheral stalk is formed by the delta and b chains.</text>
</comment>
<comment type="subcellular location">
    <subcellularLocation>
        <location evidence="1">Cell membrane</location>
        <topology evidence="1">Peripheral membrane protein</topology>
    </subcellularLocation>
</comment>
<comment type="similarity">
    <text evidence="1">Belongs to the ATPase alpha/beta chains family.</text>
</comment>
<keyword id="KW-0066">ATP synthesis</keyword>
<keyword id="KW-0067">ATP-binding</keyword>
<keyword id="KW-1003">Cell membrane</keyword>
<keyword id="KW-0139">CF(1)</keyword>
<keyword id="KW-0375">Hydrogen ion transport</keyword>
<keyword id="KW-0406">Ion transport</keyword>
<keyword id="KW-0472">Membrane</keyword>
<keyword id="KW-0547">Nucleotide-binding</keyword>
<keyword id="KW-1278">Translocase</keyword>
<keyword id="KW-0813">Transport</keyword>
<evidence type="ECO:0000255" key="1">
    <source>
        <dbReference type="HAMAP-Rule" id="MF_01347"/>
    </source>
</evidence>
<sequence length="472" mass="51890">MSKKSVGKIVRIIGPVVDVKFQEGDLPDIYDALVVINPQTGKKLILEVEQLIGDNIVRTVAMDSTDGLVRGLEVENTGEPIKAPVGRGVLGRMFNVIGEPIDEQGELKDIEYWPIHRPAPSMTEQKTEIEILETGLKVIDLLAPFPKGGKIGFFGGAGVGKTVLVMEMIRNIAIEHHGFSIFAGVGERTREGNDLYLEMTEAGVLNNTVLVFGQMNEPPGARFRVALTALTIAEYFRDVEGRDVLLFIDNIFRFVQAGSEVSALLGRMPSAVGYQPTLSTDMGELQERITSTKKGSITSVQAIYVPADDITDPAPATTFTHLDATIVLSRQLAALGLYPAVDPLDSTSKILDPNIVGKEHYEVARGVQEVLQRYKDLQDIIAILGMEELSEEDKLIVQRARKIQRFLTQPTHVAERFSGIPGVYVPIKETIRGFKEILEGRYDDLPEAAFYMVGTIDEAVEKAKKLMKSAVI</sequence>
<proteinExistence type="inferred from homology"/>
<name>ATPB_FERIS</name>
<reference key="1">
    <citation type="journal article" date="1998" name="Electrophoresis">
        <title>Bacterial phylogeny based on comparative sequence analysis.</title>
        <authorList>
            <person name="Ludwig W."/>
            <person name="Strunk O."/>
            <person name="Klugbauer S."/>
            <person name="Klugbauer N."/>
            <person name="Weizenegger M."/>
            <person name="Neumaier J."/>
            <person name="Bachleitner M."/>
            <person name="Schleifer K.H."/>
        </authorList>
    </citation>
    <scope>NUCLEOTIDE SEQUENCE [GENOMIC DNA]</scope>
    <source>
        <strain>ATCC 49647 / DSM 5733 / H21</strain>
    </source>
</reference>
<feature type="chain" id="PRO_0000144441" description="ATP synthase subunit beta">
    <location>
        <begin position="1"/>
        <end position="472"/>
    </location>
</feature>
<feature type="binding site" evidence="1">
    <location>
        <begin position="155"/>
        <end position="162"/>
    </location>
    <ligand>
        <name>ATP</name>
        <dbReference type="ChEBI" id="CHEBI:30616"/>
    </ligand>
</feature>
<protein>
    <recommendedName>
        <fullName evidence="1">ATP synthase subunit beta</fullName>
        <ecNumber evidence="1">7.1.2.2</ecNumber>
    </recommendedName>
    <alternativeName>
        <fullName evidence="1">ATP synthase F1 sector subunit beta</fullName>
    </alternativeName>
    <alternativeName>
        <fullName evidence="1">F-ATPase subunit beta</fullName>
    </alternativeName>
</protein>
<accession>O50341</accession>
<organism>
    <name type="scientific">Fervidobacterium islandicum</name>
    <dbReference type="NCBI Taxonomy" id="2423"/>
    <lineage>
        <taxon>Bacteria</taxon>
        <taxon>Thermotogati</taxon>
        <taxon>Thermotogota</taxon>
        <taxon>Thermotogae</taxon>
        <taxon>Thermotogales</taxon>
        <taxon>Fervidobacteriaceae</taxon>
        <taxon>Fervidobacterium</taxon>
    </lineage>
</organism>
<gene>
    <name evidence="1" type="primary">atpD</name>
</gene>